<evidence type="ECO:0000255" key="1">
    <source>
        <dbReference type="HAMAP-Rule" id="MF_01962"/>
    </source>
</evidence>
<dbReference type="EC" id="3.5.4.2" evidence="1"/>
<dbReference type="EMBL" id="CP000926">
    <property type="protein sequence ID" value="ABY96547.1"/>
    <property type="molecule type" value="Genomic_DNA"/>
</dbReference>
<dbReference type="RefSeq" id="WP_012270357.1">
    <property type="nucleotide sequence ID" value="NC_010322.1"/>
</dbReference>
<dbReference type="SMR" id="B0KLE3"/>
<dbReference type="KEGG" id="ppg:PputGB1_0636"/>
<dbReference type="eggNOG" id="COG1816">
    <property type="taxonomic scope" value="Bacteria"/>
</dbReference>
<dbReference type="HOGENOM" id="CLU_039228_7_0_6"/>
<dbReference type="Proteomes" id="UP000002157">
    <property type="component" value="Chromosome"/>
</dbReference>
<dbReference type="GO" id="GO:0005829">
    <property type="term" value="C:cytosol"/>
    <property type="evidence" value="ECO:0007669"/>
    <property type="project" value="TreeGrafter"/>
</dbReference>
<dbReference type="GO" id="GO:0000034">
    <property type="term" value="F:adenine deaminase activity"/>
    <property type="evidence" value="ECO:0007669"/>
    <property type="project" value="UniProtKB-UniRule"/>
</dbReference>
<dbReference type="GO" id="GO:0008270">
    <property type="term" value="F:zinc ion binding"/>
    <property type="evidence" value="ECO:0007669"/>
    <property type="project" value="UniProtKB-UniRule"/>
</dbReference>
<dbReference type="GO" id="GO:0006146">
    <property type="term" value="P:adenine catabolic process"/>
    <property type="evidence" value="ECO:0007669"/>
    <property type="project" value="UniProtKB-UniRule"/>
</dbReference>
<dbReference type="GO" id="GO:0043103">
    <property type="term" value="P:hypoxanthine salvage"/>
    <property type="evidence" value="ECO:0007669"/>
    <property type="project" value="UniProtKB-UniRule"/>
</dbReference>
<dbReference type="GO" id="GO:0009117">
    <property type="term" value="P:nucleotide metabolic process"/>
    <property type="evidence" value="ECO:0007669"/>
    <property type="project" value="UniProtKB-KW"/>
</dbReference>
<dbReference type="CDD" id="cd01320">
    <property type="entry name" value="ADA"/>
    <property type="match status" value="1"/>
</dbReference>
<dbReference type="FunFam" id="3.20.20.140:FF:000039">
    <property type="entry name" value="Adenine deaminase"/>
    <property type="match status" value="1"/>
</dbReference>
<dbReference type="Gene3D" id="3.20.20.140">
    <property type="entry name" value="Metal-dependent hydrolases"/>
    <property type="match status" value="1"/>
</dbReference>
<dbReference type="HAMAP" id="MF_01962">
    <property type="entry name" value="Adenine_deaminase"/>
    <property type="match status" value="1"/>
</dbReference>
<dbReference type="InterPro" id="IPR001365">
    <property type="entry name" value="A_deaminase_dom"/>
</dbReference>
<dbReference type="InterPro" id="IPR028892">
    <property type="entry name" value="ADE"/>
</dbReference>
<dbReference type="InterPro" id="IPR006330">
    <property type="entry name" value="Ado/ade_deaminase"/>
</dbReference>
<dbReference type="InterPro" id="IPR032466">
    <property type="entry name" value="Metal_Hydrolase"/>
</dbReference>
<dbReference type="NCBIfam" id="TIGR01430">
    <property type="entry name" value="aden_deam"/>
    <property type="match status" value="1"/>
</dbReference>
<dbReference type="NCBIfam" id="NF006850">
    <property type="entry name" value="PRK09358.1-6"/>
    <property type="match status" value="1"/>
</dbReference>
<dbReference type="PANTHER" id="PTHR43114">
    <property type="entry name" value="ADENINE DEAMINASE"/>
    <property type="match status" value="1"/>
</dbReference>
<dbReference type="PANTHER" id="PTHR43114:SF6">
    <property type="entry name" value="ADENINE DEAMINASE"/>
    <property type="match status" value="1"/>
</dbReference>
<dbReference type="Pfam" id="PF00962">
    <property type="entry name" value="A_deaminase"/>
    <property type="match status" value="1"/>
</dbReference>
<dbReference type="SUPFAM" id="SSF51556">
    <property type="entry name" value="Metallo-dependent hydrolases"/>
    <property type="match status" value="1"/>
</dbReference>
<proteinExistence type="inferred from homology"/>
<gene>
    <name type="ordered locus">PputGB1_0636</name>
</gene>
<organism>
    <name type="scientific">Pseudomonas putida (strain GB-1)</name>
    <dbReference type="NCBI Taxonomy" id="76869"/>
    <lineage>
        <taxon>Bacteria</taxon>
        <taxon>Pseudomonadati</taxon>
        <taxon>Pseudomonadota</taxon>
        <taxon>Gammaproteobacteria</taxon>
        <taxon>Pseudomonadales</taxon>
        <taxon>Pseudomonadaceae</taxon>
        <taxon>Pseudomonas</taxon>
    </lineage>
</organism>
<feature type="chain" id="PRO_1000081928" description="Adenine deaminase">
    <location>
        <begin position="1"/>
        <end position="315"/>
    </location>
</feature>
<feature type="active site" description="Proton donor" evidence="1">
    <location>
        <position position="197"/>
    </location>
</feature>
<feature type="binding site" evidence="1">
    <location>
        <position position="14"/>
    </location>
    <ligand>
        <name>Zn(2+)</name>
        <dbReference type="ChEBI" id="CHEBI:29105"/>
        <note>catalytic</note>
    </ligand>
</feature>
<feature type="binding site" evidence="1">
    <location>
        <position position="16"/>
    </location>
    <ligand>
        <name>Zn(2+)</name>
        <dbReference type="ChEBI" id="CHEBI:29105"/>
        <note>catalytic</note>
    </ligand>
</feature>
<feature type="binding site" evidence="1">
    <location>
        <position position="194"/>
    </location>
    <ligand>
        <name>Zn(2+)</name>
        <dbReference type="ChEBI" id="CHEBI:29105"/>
        <note>catalytic</note>
    </ligand>
</feature>
<feature type="binding site" evidence="1">
    <location>
        <position position="275"/>
    </location>
    <ligand>
        <name>Zn(2+)</name>
        <dbReference type="ChEBI" id="CHEBI:29105"/>
        <note>catalytic</note>
    </ligand>
</feature>
<feature type="binding site" evidence="1">
    <location>
        <position position="276"/>
    </location>
    <ligand>
        <name>substrate</name>
    </ligand>
</feature>
<feature type="site" description="Important for catalytic activity" evidence="1">
    <location>
        <position position="218"/>
    </location>
</feature>
<name>ADE_PSEPG</name>
<accession>B0KLE3</accession>
<reference key="1">
    <citation type="submission" date="2008-01" db="EMBL/GenBank/DDBJ databases">
        <title>Complete sequence of Pseudomonas putida GB-1.</title>
        <authorList>
            <consortium name="US DOE Joint Genome Institute"/>
            <person name="Copeland A."/>
            <person name="Lucas S."/>
            <person name="Lapidus A."/>
            <person name="Barry K."/>
            <person name="Glavina del Rio T."/>
            <person name="Dalin E."/>
            <person name="Tice H."/>
            <person name="Pitluck S."/>
            <person name="Bruce D."/>
            <person name="Goodwin L."/>
            <person name="Chertkov O."/>
            <person name="Brettin T."/>
            <person name="Detter J.C."/>
            <person name="Han C."/>
            <person name="Kuske C.R."/>
            <person name="Schmutz J."/>
            <person name="Larimer F."/>
            <person name="Land M."/>
            <person name="Hauser L."/>
            <person name="Kyrpides N."/>
            <person name="Kim E."/>
            <person name="McCarthy J.K."/>
            <person name="Richardson P."/>
        </authorList>
    </citation>
    <scope>NUCLEOTIDE SEQUENCE [LARGE SCALE GENOMIC DNA]</scope>
    <source>
        <strain>GB-1</strain>
    </source>
</reference>
<keyword id="KW-0378">Hydrolase</keyword>
<keyword id="KW-0479">Metal-binding</keyword>
<keyword id="KW-0546">Nucleotide metabolism</keyword>
<keyword id="KW-0862">Zinc</keyword>
<protein>
    <recommendedName>
        <fullName evidence="1">Adenine deaminase</fullName>
        <shortName evidence="1">ADE</shortName>
        <ecNumber evidence="1">3.5.4.2</ecNumber>
    </recommendedName>
    <alternativeName>
        <fullName evidence="1">Adenine aminohydrolase</fullName>
        <shortName evidence="1">AAH</shortName>
    </alternativeName>
</protein>
<sequence length="315" mass="35981">MYDWLNALPKAELHLHLEGSLEPELLFALAERNKIALPWNDVETLRGAYAFNNLQEFLDLYYQGADVLRTEQDFYDLTWAYLQRCKAQNVVHTEPFFDPQTHTDRGIAFEVVLNGISQALKDGREQLGISSGLILSFLRHLSEDEAHKTLDQALPFRDAFIAVGLDSSEMGHPPRKFQRVFDRARSEGFVAVAHAGEEGPPEYIWEALDLLKIKRIDHGVRAIEDERLMQRIIEEQIPLTVCPLSNTKLCVFDHMSQHNILDMLERGVKVTVNSDDPAYFGGYVTENFHALHTHLGMTEDQARRLAQNSLDARLI</sequence>
<comment type="function">
    <text evidence="1">Catalyzes the hydrolytic deamination of adenine to hypoxanthine. Plays an important role in the purine salvage pathway and in nitrogen catabolism.</text>
</comment>
<comment type="catalytic activity">
    <reaction evidence="1">
        <text>adenine + H2O + H(+) = hypoxanthine + NH4(+)</text>
        <dbReference type="Rhea" id="RHEA:23688"/>
        <dbReference type="ChEBI" id="CHEBI:15377"/>
        <dbReference type="ChEBI" id="CHEBI:15378"/>
        <dbReference type="ChEBI" id="CHEBI:16708"/>
        <dbReference type="ChEBI" id="CHEBI:17368"/>
        <dbReference type="ChEBI" id="CHEBI:28938"/>
        <dbReference type="EC" id="3.5.4.2"/>
    </reaction>
</comment>
<comment type="cofactor">
    <cofactor evidence="1">
        <name>Zn(2+)</name>
        <dbReference type="ChEBI" id="CHEBI:29105"/>
    </cofactor>
    <text evidence="1">Binds 1 zinc ion per subunit.</text>
</comment>
<comment type="similarity">
    <text evidence="1">Belongs to the metallo-dependent hydrolases superfamily. Adenosine and AMP deaminases family. Adenine deaminase type 2 subfamily.</text>
</comment>